<dbReference type="EMBL" id="CP000116">
    <property type="protein sequence ID" value="AAZ96360.1"/>
    <property type="molecule type" value="Genomic_DNA"/>
</dbReference>
<dbReference type="RefSeq" id="WP_011310919.1">
    <property type="nucleotide sequence ID" value="NC_007404.1"/>
</dbReference>
<dbReference type="SMR" id="Q3SLP7"/>
<dbReference type="STRING" id="292415.Tbd_0407"/>
<dbReference type="KEGG" id="tbd:Tbd_0407"/>
<dbReference type="eggNOG" id="COG0089">
    <property type="taxonomic scope" value="Bacteria"/>
</dbReference>
<dbReference type="HOGENOM" id="CLU_037562_3_1_4"/>
<dbReference type="OrthoDB" id="9793353at2"/>
<dbReference type="Proteomes" id="UP000008291">
    <property type="component" value="Chromosome"/>
</dbReference>
<dbReference type="GO" id="GO:1990904">
    <property type="term" value="C:ribonucleoprotein complex"/>
    <property type="evidence" value="ECO:0007669"/>
    <property type="project" value="UniProtKB-KW"/>
</dbReference>
<dbReference type="GO" id="GO:0005840">
    <property type="term" value="C:ribosome"/>
    <property type="evidence" value="ECO:0007669"/>
    <property type="project" value="UniProtKB-KW"/>
</dbReference>
<dbReference type="GO" id="GO:0019843">
    <property type="term" value="F:rRNA binding"/>
    <property type="evidence" value="ECO:0007669"/>
    <property type="project" value="UniProtKB-UniRule"/>
</dbReference>
<dbReference type="GO" id="GO:0003735">
    <property type="term" value="F:structural constituent of ribosome"/>
    <property type="evidence" value="ECO:0007669"/>
    <property type="project" value="InterPro"/>
</dbReference>
<dbReference type="GO" id="GO:0006412">
    <property type="term" value="P:translation"/>
    <property type="evidence" value="ECO:0007669"/>
    <property type="project" value="UniProtKB-UniRule"/>
</dbReference>
<dbReference type="FunFam" id="3.30.70.330:FF:000001">
    <property type="entry name" value="50S ribosomal protein L23"/>
    <property type="match status" value="1"/>
</dbReference>
<dbReference type="Gene3D" id="3.30.70.330">
    <property type="match status" value="1"/>
</dbReference>
<dbReference type="HAMAP" id="MF_01369_B">
    <property type="entry name" value="Ribosomal_uL23_B"/>
    <property type="match status" value="1"/>
</dbReference>
<dbReference type="InterPro" id="IPR012677">
    <property type="entry name" value="Nucleotide-bd_a/b_plait_sf"/>
</dbReference>
<dbReference type="InterPro" id="IPR013025">
    <property type="entry name" value="Ribosomal_uL23-like"/>
</dbReference>
<dbReference type="InterPro" id="IPR012678">
    <property type="entry name" value="Ribosomal_uL23/eL15/eS24_sf"/>
</dbReference>
<dbReference type="NCBIfam" id="NF004359">
    <property type="entry name" value="PRK05738.1-3"/>
    <property type="match status" value="1"/>
</dbReference>
<dbReference type="NCBIfam" id="NF004363">
    <property type="entry name" value="PRK05738.2-4"/>
    <property type="match status" value="1"/>
</dbReference>
<dbReference type="PANTHER" id="PTHR11620">
    <property type="entry name" value="60S RIBOSOMAL PROTEIN L23A"/>
    <property type="match status" value="1"/>
</dbReference>
<dbReference type="Pfam" id="PF00276">
    <property type="entry name" value="Ribosomal_L23"/>
    <property type="match status" value="1"/>
</dbReference>
<dbReference type="SUPFAM" id="SSF54189">
    <property type="entry name" value="Ribosomal proteins S24e, L23 and L15e"/>
    <property type="match status" value="1"/>
</dbReference>
<keyword id="KW-1185">Reference proteome</keyword>
<keyword id="KW-0687">Ribonucleoprotein</keyword>
<keyword id="KW-0689">Ribosomal protein</keyword>
<keyword id="KW-0694">RNA-binding</keyword>
<keyword id="KW-0699">rRNA-binding</keyword>
<evidence type="ECO:0000255" key="1">
    <source>
        <dbReference type="HAMAP-Rule" id="MF_01369"/>
    </source>
</evidence>
<evidence type="ECO:0000305" key="2"/>
<proteinExistence type="inferred from homology"/>
<organism>
    <name type="scientific">Thiobacillus denitrificans (strain ATCC 25259 / T1)</name>
    <dbReference type="NCBI Taxonomy" id="292415"/>
    <lineage>
        <taxon>Bacteria</taxon>
        <taxon>Pseudomonadati</taxon>
        <taxon>Pseudomonadota</taxon>
        <taxon>Betaproteobacteria</taxon>
        <taxon>Nitrosomonadales</taxon>
        <taxon>Thiobacillaceae</taxon>
        <taxon>Thiobacillus</taxon>
    </lineage>
</organism>
<feature type="chain" id="PRO_0000272864" description="Large ribosomal subunit protein uL23">
    <location>
        <begin position="1"/>
        <end position="101"/>
    </location>
</feature>
<reference key="1">
    <citation type="journal article" date="2006" name="J. Bacteriol.">
        <title>The genome sequence of the obligately chemolithoautotrophic, facultatively anaerobic bacterium Thiobacillus denitrificans.</title>
        <authorList>
            <person name="Beller H.R."/>
            <person name="Chain P.S."/>
            <person name="Letain T.E."/>
            <person name="Chakicherla A."/>
            <person name="Larimer F.W."/>
            <person name="Richardson P.M."/>
            <person name="Coleman M.A."/>
            <person name="Wood A.P."/>
            <person name="Kelly D.P."/>
        </authorList>
    </citation>
    <scope>NUCLEOTIDE SEQUENCE [LARGE SCALE GENOMIC DNA]</scope>
    <source>
        <strain>ATCC 25259 / T1</strain>
    </source>
</reference>
<comment type="function">
    <text evidence="1">One of the early assembly proteins it binds 23S rRNA. One of the proteins that surrounds the polypeptide exit tunnel on the outside of the ribosome. Forms the main docking site for trigger factor binding to the ribosome.</text>
</comment>
<comment type="subunit">
    <text evidence="1">Part of the 50S ribosomal subunit. Contacts protein L29, and trigger factor when it is bound to the ribosome.</text>
</comment>
<comment type="similarity">
    <text evidence="1">Belongs to the universal ribosomal protein uL23 family.</text>
</comment>
<sequence length="101" mass="10993">MGAISQERLLKVILAPVISEKSTRVADKLNQVVFRVLPDATKQEIGAAVASLFKVEVAGVQVLNVKGKVKRSGRVMGRRDSWKKAYVTLKPGQDIDFASGQ</sequence>
<name>RL23_THIDA</name>
<accession>Q3SLP7</accession>
<protein>
    <recommendedName>
        <fullName evidence="1">Large ribosomal subunit protein uL23</fullName>
    </recommendedName>
    <alternativeName>
        <fullName evidence="2">50S ribosomal protein L23</fullName>
    </alternativeName>
</protein>
<gene>
    <name evidence="1" type="primary">rplW</name>
    <name type="ordered locus">Tbd_0407</name>
</gene>